<evidence type="ECO:0000255" key="1">
    <source>
        <dbReference type="HAMAP-Rule" id="MF_00251"/>
    </source>
</evidence>
<evidence type="ECO:0000305" key="2"/>
<reference key="1">
    <citation type="journal article" date="2007" name="PLoS ONE">
        <title>Paradoxical DNA repair and peroxide resistance gene conservation in Bacillus pumilus SAFR-032.</title>
        <authorList>
            <person name="Gioia J."/>
            <person name="Yerrapragada S."/>
            <person name="Qin X."/>
            <person name="Jiang H."/>
            <person name="Igboeli O.C."/>
            <person name="Muzny D."/>
            <person name="Dugan-Rocha S."/>
            <person name="Ding Y."/>
            <person name="Hawes A."/>
            <person name="Liu W."/>
            <person name="Perez L."/>
            <person name="Kovar C."/>
            <person name="Dinh H."/>
            <person name="Lee S."/>
            <person name="Nazareth L."/>
            <person name="Blyth P."/>
            <person name="Holder M."/>
            <person name="Buhay C."/>
            <person name="Tirumalai M.R."/>
            <person name="Liu Y."/>
            <person name="Dasgupta I."/>
            <person name="Bokhetache L."/>
            <person name="Fujita M."/>
            <person name="Karouia F."/>
            <person name="Eswara Moorthy P."/>
            <person name="Siefert J."/>
            <person name="Uzman A."/>
            <person name="Buzumbo P."/>
            <person name="Verma A."/>
            <person name="Zwiya H."/>
            <person name="McWilliams B.D."/>
            <person name="Olowu A."/>
            <person name="Clinkenbeard K.D."/>
            <person name="Newcombe D."/>
            <person name="Golebiewski L."/>
            <person name="Petrosino J.F."/>
            <person name="Nicholson W.L."/>
            <person name="Fox G.E."/>
            <person name="Venkateswaran K."/>
            <person name="Highlander S.K."/>
            <person name="Weinstock G.M."/>
        </authorList>
    </citation>
    <scope>NUCLEOTIDE SEQUENCE [LARGE SCALE GENOMIC DNA]</scope>
    <source>
        <strain>SAFR-032</strain>
    </source>
</reference>
<name>RL36_BACP2</name>
<comment type="similarity">
    <text evidence="1">Belongs to the bacterial ribosomal protein bL36 family.</text>
</comment>
<keyword id="KW-0687">Ribonucleoprotein</keyword>
<keyword id="KW-0689">Ribosomal protein</keyword>
<gene>
    <name evidence="1" type="primary">rpmJ</name>
    <name type="ordered locus">BPUM_0127</name>
</gene>
<protein>
    <recommendedName>
        <fullName evidence="1">Large ribosomal subunit protein bL36</fullName>
    </recommendedName>
    <alternativeName>
        <fullName evidence="2">50S ribosomal protein L36</fullName>
    </alternativeName>
</protein>
<feature type="chain" id="PRO_1000059033" description="Large ribosomal subunit protein bL36">
    <location>
        <begin position="1"/>
        <end position="37"/>
    </location>
</feature>
<sequence>MKVRPSVKPICEKCKVIRRKGKVMVICENPKHKQKQG</sequence>
<dbReference type="EMBL" id="CP000813">
    <property type="protein sequence ID" value="ABV60826.1"/>
    <property type="molecule type" value="Genomic_DNA"/>
</dbReference>
<dbReference type="RefSeq" id="WP_003156543.1">
    <property type="nucleotide sequence ID" value="NZ_VEIS01000020.1"/>
</dbReference>
<dbReference type="SMR" id="A8F9A9"/>
<dbReference type="STRING" id="315750.BPUM_0127"/>
<dbReference type="GeneID" id="97412846"/>
<dbReference type="KEGG" id="bpu:BPUM_0127"/>
<dbReference type="eggNOG" id="COG0257">
    <property type="taxonomic scope" value="Bacteria"/>
</dbReference>
<dbReference type="HOGENOM" id="CLU_135723_6_2_9"/>
<dbReference type="OrthoDB" id="9802520at2"/>
<dbReference type="Proteomes" id="UP000001355">
    <property type="component" value="Chromosome"/>
</dbReference>
<dbReference type="GO" id="GO:0005737">
    <property type="term" value="C:cytoplasm"/>
    <property type="evidence" value="ECO:0007669"/>
    <property type="project" value="UniProtKB-ARBA"/>
</dbReference>
<dbReference type="GO" id="GO:1990904">
    <property type="term" value="C:ribonucleoprotein complex"/>
    <property type="evidence" value="ECO:0007669"/>
    <property type="project" value="UniProtKB-KW"/>
</dbReference>
<dbReference type="GO" id="GO:0005840">
    <property type="term" value="C:ribosome"/>
    <property type="evidence" value="ECO:0007669"/>
    <property type="project" value="UniProtKB-KW"/>
</dbReference>
<dbReference type="GO" id="GO:0003735">
    <property type="term" value="F:structural constituent of ribosome"/>
    <property type="evidence" value="ECO:0007669"/>
    <property type="project" value="InterPro"/>
</dbReference>
<dbReference type="GO" id="GO:0006412">
    <property type="term" value="P:translation"/>
    <property type="evidence" value="ECO:0007669"/>
    <property type="project" value="UniProtKB-UniRule"/>
</dbReference>
<dbReference type="HAMAP" id="MF_00251">
    <property type="entry name" value="Ribosomal_bL36"/>
    <property type="match status" value="1"/>
</dbReference>
<dbReference type="InterPro" id="IPR000473">
    <property type="entry name" value="Ribosomal_bL36"/>
</dbReference>
<dbReference type="InterPro" id="IPR035977">
    <property type="entry name" value="Ribosomal_bL36_sp"/>
</dbReference>
<dbReference type="NCBIfam" id="TIGR01022">
    <property type="entry name" value="rpmJ_bact"/>
    <property type="match status" value="1"/>
</dbReference>
<dbReference type="PANTHER" id="PTHR42888">
    <property type="entry name" value="50S RIBOSOMAL PROTEIN L36, CHLOROPLASTIC"/>
    <property type="match status" value="1"/>
</dbReference>
<dbReference type="PANTHER" id="PTHR42888:SF1">
    <property type="entry name" value="LARGE RIBOSOMAL SUBUNIT PROTEIN BL36C"/>
    <property type="match status" value="1"/>
</dbReference>
<dbReference type="Pfam" id="PF00444">
    <property type="entry name" value="Ribosomal_L36"/>
    <property type="match status" value="1"/>
</dbReference>
<dbReference type="SUPFAM" id="SSF57840">
    <property type="entry name" value="Ribosomal protein L36"/>
    <property type="match status" value="1"/>
</dbReference>
<dbReference type="PROSITE" id="PS00828">
    <property type="entry name" value="RIBOSOMAL_L36"/>
    <property type="match status" value="1"/>
</dbReference>
<accession>A8F9A9</accession>
<proteinExistence type="inferred from homology"/>
<organism>
    <name type="scientific">Bacillus pumilus (strain SAFR-032)</name>
    <dbReference type="NCBI Taxonomy" id="315750"/>
    <lineage>
        <taxon>Bacteria</taxon>
        <taxon>Bacillati</taxon>
        <taxon>Bacillota</taxon>
        <taxon>Bacilli</taxon>
        <taxon>Bacillales</taxon>
        <taxon>Bacillaceae</taxon>
        <taxon>Bacillus</taxon>
    </lineage>
</organism>